<reference key="1">
    <citation type="journal article" date="1990" name="Nucleic Acids Res.">
        <title>DNA sequence analysis of the imp UV protection and mutation operon of the plasmid TP110: identification of a third gene.</title>
        <authorList>
            <person name="Lodwick D."/>
            <person name="Owen D."/>
            <person name="Strike P."/>
        </authorList>
    </citation>
    <scope>NUCLEOTIDE SEQUENCE [GENOMIC DNA]</scope>
    <source>
        <plasmid>IncI1 TP110</plasmid>
    </source>
</reference>
<reference key="2">
    <citation type="submission" date="2002-05" db="EMBL/GenBank/DDBJ databases">
        <title>Organization and diversification of plasmid genomes: complete nucleotide sequence of R64 genome.</title>
        <authorList>
            <person name="Sampei G."/>
            <person name="Komano T."/>
            <person name="Sasaki T."/>
            <person name="Tachibana K."/>
            <person name="Furuya N."/>
            <person name="Saito Y."/>
            <person name="Suzuki T."/>
            <person name="Mizobuchi K."/>
        </authorList>
    </citation>
    <scope>NUCLEOTIDE SEQUENCE [GENOMIC DNA]</scope>
    <source>
        <plasmid>IncI1 R64</plasmid>
    </source>
</reference>
<comment type="function">
    <text>Involved in UV protection and mutation.</text>
</comment>
<comment type="similarity">
    <text evidence="2">Belongs to the peptidase S24 family.</text>
</comment>
<proteinExistence type="inferred from homology"/>
<evidence type="ECO:0000250" key="1"/>
<evidence type="ECO:0000305" key="2"/>
<dbReference type="EC" id="3.4.21.-"/>
<dbReference type="EMBL" id="X53528">
    <property type="protein sequence ID" value="CAA37607.1"/>
    <property type="molecule type" value="Genomic_DNA"/>
</dbReference>
<dbReference type="EMBL" id="AP005147">
    <property type="protein sequence ID" value="BAB91615.1"/>
    <property type="molecule type" value="Genomic_DNA"/>
</dbReference>
<dbReference type="PIR" id="JQ0660">
    <property type="entry name" value="JQ0660"/>
</dbReference>
<dbReference type="RefSeq" id="NP_863407.1">
    <property type="nucleotide sequence ID" value="NC_005014.1"/>
</dbReference>
<dbReference type="RefSeq" id="YP_004823695.1">
    <property type="nucleotide sequence ID" value="NC_015965.1"/>
</dbReference>
<dbReference type="RefSeq" id="YP_006955753.1">
    <property type="nucleotide sequence ID" value="NC_019111.1"/>
</dbReference>
<dbReference type="RefSeq" id="YP_008994915.1">
    <property type="nucleotide sequence ID" value="NC_023275.1"/>
</dbReference>
<dbReference type="RefSeq" id="YP_008995022.1">
    <property type="nucleotide sequence ID" value="NC_023276.1"/>
</dbReference>
<dbReference type="RefSeq" id="YP_008997551.1">
    <property type="nucleotide sequence ID" value="NC_023290.1"/>
</dbReference>
<dbReference type="RefSeq" id="YP_009022403.1">
    <property type="nucleotide sequence ID" value="NC_023900.1"/>
</dbReference>
<dbReference type="SMR" id="P18641"/>
<dbReference type="MEROPS" id="S24.003"/>
<dbReference type="GO" id="GO:0003677">
    <property type="term" value="F:DNA binding"/>
    <property type="evidence" value="ECO:0007669"/>
    <property type="project" value="InterPro"/>
</dbReference>
<dbReference type="GO" id="GO:0008236">
    <property type="term" value="F:serine-type peptidase activity"/>
    <property type="evidence" value="ECO:0007669"/>
    <property type="project" value="UniProtKB-KW"/>
</dbReference>
<dbReference type="GO" id="GO:0006281">
    <property type="term" value="P:DNA repair"/>
    <property type="evidence" value="ECO:0007669"/>
    <property type="project" value="UniProtKB-KW"/>
</dbReference>
<dbReference type="GO" id="GO:0006508">
    <property type="term" value="P:proteolysis"/>
    <property type="evidence" value="ECO:0007669"/>
    <property type="project" value="UniProtKB-KW"/>
</dbReference>
<dbReference type="GO" id="GO:0006355">
    <property type="term" value="P:regulation of DNA-templated transcription"/>
    <property type="evidence" value="ECO:0007669"/>
    <property type="project" value="InterPro"/>
</dbReference>
<dbReference type="GO" id="GO:0009432">
    <property type="term" value="P:SOS response"/>
    <property type="evidence" value="ECO:0007669"/>
    <property type="project" value="UniProtKB-KW"/>
</dbReference>
<dbReference type="CDD" id="cd06529">
    <property type="entry name" value="S24_LexA-like"/>
    <property type="match status" value="1"/>
</dbReference>
<dbReference type="Gene3D" id="2.10.109.10">
    <property type="entry name" value="Umud Fragment, subunit A"/>
    <property type="match status" value="1"/>
</dbReference>
<dbReference type="InterPro" id="IPR039418">
    <property type="entry name" value="LexA-like"/>
</dbReference>
<dbReference type="InterPro" id="IPR036286">
    <property type="entry name" value="LexA/Signal_pep-like_sf"/>
</dbReference>
<dbReference type="InterPro" id="IPR050077">
    <property type="entry name" value="LexA_repressor"/>
</dbReference>
<dbReference type="InterPro" id="IPR006197">
    <property type="entry name" value="Peptidase_S24_LexA"/>
</dbReference>
<dbReference type="InterPro" id="IPR015927">
    <property type="entry name" value="Peptidase_S24_S26A/B/C"/>
</dbReference>
<dbReference type="NCBIfam" id="NF007621">
    <property type="entry name" value="PRK10276.1"/>
    <property type="match status" value="1"/>
</dbReference>
<dbReference type="PANTHER" id="PTHR33516">
    <property type="entry name" value="LEXA REPRESSOR"/>
    <property type="match status" value="1"/>
</dbReference>
<dbReference type="PANTHER" id="PTHR33516:SF2">
    <property type="entry name" value="LEXA REPRESSOR-RELATED"/>
    <property type="match status" value="1"/>
</dbReference>
<dbReference type="Pfam" id="PF00717">
    <property type="entry name" value="Peptidase_S24"/>
    <property type="match status" value="1"/>
</dbReference>
<dbReference type="PRINTS" id="PR00726">
    <property type="entry name" value="LEXASERPTASE"/>
</dbReference>
<dbReference type="SUPFAM" id="SSF51306">
    <property type="entry name" value="LexA/Signal peptidase"/>
    <property type="match status" value="1"/>
</dbReference>
<feature type="chain" id="PRO_0000041984" description="Protein ImpA">
    <location>
        <begin position="1"/>
        <end position="145"/>
    </location>
</feature>
<feature type="chain" id="PRO_0000027297" description="Protein ImpA'">
    <location>
        <begin position="29"/>
        <end position="145"/>
    </location>
</feature>
<feature type="active site" description="For autocatalytic cleavage activity" evidence="1">
    <location>
        <position position="64"/>
    </location>
</feature>
<feature type="active site" description="For autocatalytic cleavage activity" evidence="1">
    <location>
        <position position="101"/>
    </location>
</feature>
<feature type="site" description="Cleavage; by autolysis" evidence="1">
    <location>
        <begin position="28"/>
        <end position="29"/>
    </location>
</feature>
<name>IMPA_SALTM</name>
<protein>
    <recommendedName>
        <fullName>Protein ImpA</fullName>
        <ecNumber>3.4.21.-</ecNumber>
    </recommendedName>
    <component>
        <recommendedName>
            <fullName>Protein ImpA'</fullName>
        </recommendedName>
    </component>
</protein>
<gene>
    <name type="primary">impA</name>
</gene>
<geneLocation type="plasmid">
    <name>IncI1 TP110</name>
</geneLocation>
<geneLocation type="plasmid">
    <name>IncI1 R64</name>
</geneLocation>
<sequence>MSTVYHRPADPSGDDSYVRPLFADRCQAGFPSPATDYAEQELDLNSYCISRPAATFFLRASGESMNQAGVQNGDLLVVDRAEKPQHGDIVIAEIDGEFTVKRLLLRPRPALEPVSDSPEFRTLYPENICIFGVVTHVIHRTRELR</sequence>
<keyword id="KW-0068">Autocatalytic cleavage</keyword>
<keyword id="KW-0227">DNA damage</keyword>
<keyword id="KW-0234">DNA repair</keyword>
<keyword id="KW-0378">Hydrolase</keyword>
<keyword id="KW-0614">Plasmid</keyword>
<keyword id="KW-0645">Protease</keyword>
<keyword id="KW-0720">Serine protease</keyword>
<keyword id="KW-0741">SOS mutagenesis</keyword>
<keyword id="KW-0742">SOS response</keyword>
<organism>
    <name type="scientific">Salmonella typhimurium</name>
    <dbReference type="NCBI Taxonomy" id="90371"/>
    <lineage>
        <taxon>Bacteria</taxon>
        <taxon>Pseudomonadati</taxon>
        <taxon>Pseudomonadota</taxon>
        <taxon>Gammaproteobacteria</taxon>
        <taxon>Enterobacterales</taxon>
        <taxon>Enterobacteriaceae</taxon>
        <taxon>Salmonella</taxon>
    </lineage>
</organism>
<accession>P18641</accession>
<accession>Q79VW6</accession>